<protein>
    <recommendedName>
        <fullName evidence="1">Small ribosomal subunit protein bS18</fullName>
    </recommendedName>
    <alternativeName>
        <fullName evidence="2">30S ribosomal protein S18</fullName>
    </alternativeName>
</protein>
<feature type="chain" id="PRO_0000345487" description="Small ribosomal subunit protein bS18">
    <location>
        <begin position="1"/>
        <end position="78"/>
    </location>
</feature>
<evidence type="ECO:0000255" key="1">
    <source>
        <dbReference type="HAMAP-Rule" id="MF_00270"/>
    </source>
</evidence>
<evidence type="ECO:0000305" key="2"/>
<comment type="function">
    <text evidence="1">Binds as a heterodimer with protein bS6 to the central domain of the 16S rRNA, where it helps stabilize the platform of the 30S subunit.</text>
</comment>
<comment type="subunit">
    <text evidence="1">Part of the 30S ribosomal subunit. Forms a tight heterodimer with protein bS6.</text>
</comment>
<comment type="similarity">
    <text evidence="1">Belongs to the bacterial ribosomal protein bS18 family.</text>
</comment>
<dbReference type="EMBL" id="CP000750">
    <property type="protein sequence ID" value="ABS05800.1"/>
    <property type="molecule type" value="Genomic_DNA"/>
</dbReference>
<dbReference type="RefSeq" id="WP_012085900.1">
    <property type="nucleotide sequence ID" value="NC_009664.2"/>
</dbReference>
<dbReference type="SMR" id="A6WG61"/>
<dbReference type="STRING" id="266940.Krad_4337"/>
<dbReference type="KEGG" id="kra:Krad_4337"/>
<dbReference type="eggNOG" id="COG0238">
    <property type="taxonomic scope" value="Bacteria"/>
</dbReference>
<dbReference type="HOGENOM" id="CLU_148710_1_0_11"/>
<dbReference type="OrthoDB" id="9812008at2"/>
<dbReference type="Proteomes" id="UP000001116">
    <property type="component" value="Chromosome"/>
</dbReference>
<dbReference type="GO" id="GO:0022627">
    <property type="term" value="C:cytosolic small ribosomal subunit"/>
    <property type="evidence" value="ECO:0007669"/>
    <property type="project" value="TreeGrafter"/>
</dbReference>
<dbReference type="GO" id="GO:0070181">
    <property type="term" value="F:small ribosomal subunit rRNA binding"/>
    <property type="evidence" value="ECO:0007669"/>
    <property type="project" value="TreeGrafter"/>
</dbReference>
<dbReference type="GO" id="GO:0003735">
    <property type="term" value="F:structural constituent of ribosome"/>
    <property type="evidence" value="ECO:0007669"/>
    <property type="project" value="InterPro"/>
</dbReference>
<dbReference type="GO" id="GO:0006412">
    <property type="term" value="P:translation"/>
    <property type="evidence" value="ECO:0007669"/>
    <property type="project" value="UniProtKB-UniRule"/>
</dbReference>
<dbReference type="Gene3D" id="4.10.640.10">
    <property type="entry name" value="Ribosomal protein S18"/>
    <property type="match status" value="1"/>
</dbReference>
<dbReference type="HAMAP" id="MF_00270">
    <property type="entry name" value="Ribosomal_bS18"/>
    <property type="match status" value="1"/>
</dbReference>
<dbReference type="InterPro" id="IPR001648">
    <property type="entry name" value="Ribosomal_bS18"/>
</dbReference>
<dbReference type="InterPro" id="IPR018275">
    <property type="entry name" value="Ribosomal_bS18_CS"/>
</dbReference>
<dbReference type="InterPro" id="IPR036870">
    <property type="entry name" value="Ribosomal_bS18_sf"/>
</dbReference>
<dbReference type="NCBIfam" id="TIGR00165">
    <property type="entry name" value="S18"/>
    <property type="match status" value="1"/>
</dbReference>
<dbReference type="PANTHER" id="PTHR13479">
    <property type="entry name" value="30S RIBOSOMAL PROTEIN S18"/>
    <property type="match status" value="1"/>
</dbReference>
<dbReference type="PANTHER" id="PTHR13479:SF40">
    <property type="entry name" value="SMALL RIBOSOMAL SUBUNIT PROTEIN BS18M"/>
    <property type="match status" value="1"/>
</dbReference>
<dbReference type="Pfam" id="PF01084">
    <property type="entry name" value="Ribosomal_S18"/>
    <property type="match status" value="1"/>
</dbReference>
<dbReference type="PRINTS" id="PR00974">
    <property type="entry name" value="RIBOSOMALS18"/>
</dbReference>
<dbReference type="SUPFAM" id="SSF46911">
    <property type="entry name" value="Ribosomal protein S18"/>
    <property type="match status" value="1"/>
</dbReference>
<dbReference type="PROSITE" id="PS00057">
    <property type="entry name" value="RIBOSOMAL_S18"/>
    <property type="match status" value="1"/>
</dbReference>
<name>RS18_KINRD</name>
<keyword id="KW-1185">Reference proteome</keyword>
<keyword id="KW-0687">Ribonucleoprotein</keyword>
<keyword id="KW-0689">Ribosomal protein</keyword>
<keyword id="KW-0694">RNA-binding</keyword>
<keyword id="KW-0699">rRNA-binding</keyword>
<proteinExistence type="inferred from homology"/>
<gene>
    <name evidence="1" type="primary">rpsR</name>
    <name type="ordered locus">Krad_4337</name>
</gene>
<sequence length="78" mass="8819">MAKVPVRKPKKKQNPLKAAKIEAVDYKDTALLRKFISDRGKIRARRVTGVSVQEQRQIAKAIKNAREMALLPYSSSAR</sequence>
<organism>
    <name type="scientific">Kineococcus radiotolerans (strain ATCC BAA-149 / DSM 14245 / SRS30216)</name>
    <dbReference type="NCBI Taxonomy" id="266940"/>
    <lineage>
        <taxon>Bacteria</taxon>
        <taxon>Bacillati</taxon>
        <taxon>Actinomycetota</taxon>
        <taxon>Actinomycetes</taxon>
        <taxon>Kineosporiales</taxon>
        <taxon>Kineosporiaceae</taxon>
        <taxon>Kineococcus</taxon>
    </lineage>
</organism>
<reference key="1">
    <citation type="journal article" date="2008" name="PLoS ONE">
        <title>Survival in nuclear waste, extreme resistance, and potential applications gleaned from the genome sequence of Kineococcus radiotolerans SRS30216.</title>
        <authorList>
            <person name="Bagwell C.E."/>
            <person name="Bhat S."/>
            <person name="Hawkins G.M."/>
            <person name="Smith B.W."/>
            <person name="Biswas T."/>
            <person name="Hoover T.R."/>
            <person name="Saunders E."/>
            <person name="Han C.S."/>
            <person name="Tsodikov O.V."/>
            <person name="Shimkets L.J."/>
        </authorList>
    </citation>
    <scope>NUCLEOTIDE SEQUENCE [LARGE SCALE GENOMIC DNA]</scope>
    <source>
        <strain>ATCC BAA-149 / DSM 14245 / SRS30216</strain>
    </source>
</reference>
<accession>A6WG61</accession>